<organism>
    <name type="scientific">Coturnix coturnix</name>
    <name type="common">Common quail</name>
    <name type="synonym">Tetrao coturnix</name>
    <dbReference type="NCBI Taxonomy" id="9091"/>
    <lineage>
        <taxon>Eukaryota</taxon>
        <taxon>Metazoa</taxon>
        <taxon>Chordata</taxon>
        <taxon>Craniata</taxon>
        <taxon>Vertebrata</taxon>
        <taxon>Euteleostomi</taxon>
        <taxon>Archelosauria</taxon>
        <taxon>Archosauria</taxon>
        <taxon>Dinosauria</taxon>
        <taxon>Saurischia</taxon>
        <taxon>Theropoda</taxon>
        <taxon>Coelurosauria</taxon>
        <taxon>Aves</taxon>
        <taxon>Neognathae</taxon>
        <taxon>Galloanserae</taxon>
        <taxon>Galliformes</taxon>
        <taxon>Phasianidae</taxon>
        <taxon>Perdicinae</taxon>
        <taxon>Coturnix</taxon>
    </lineage>
</organism>
<feature type="signal peptide" evidence="3">
    <location>
        <begin position="1"/>
        <end position="22"/>
    </location>
</feature>
<feature type="chain" id="PRO_0000033437" description="Extracellular sulfatase Sulf-1">
    <location>
        <begin position="23"/>
        <end position="867"/>
    </location>
</feature>
<feature type="region of interest" description="Disordered" evidence="4">
    <location>
        <begin position="494"/>
        <end position="522"/>
    </location>
</feature>
<feature type="region of interest" description="Disordered" evidence="4">
    <location>
        <begin position="842"/>
        <end position="867"/>
    </location>
</feature>
<feature type="compositionally biased region" description="Basic and acidic residues" evidence="4">
    <location>
        <begin position="498"/>
        <end position="513"/>
    </location>
</feature>
<feature type="active site" description="Nucleophile" evidence="2">
    <location>
        <position position="87"/>
    </location>
</feature>
<feature type="binding site" evidence="1">
    <location>
        <position position="51"/>
    </location>
    <ligand>
        <name>Ca(2+)</name>
        <dbReference type="ChEBI" id="CHEBI:29108"/>
    </ligand>
</feature>
<feature type="binding site" evidence="1">
    <location>
        <position position="52"/>
    </location>
    <ligand>
        <name>Ca(2+)</name>
        <dbReference type="ChEBI" id="CHEBI:29108"/>
    </ligand>
</feature>
<feature type="binding site" description="via 3-oxoalanine" evidence="1">
    <location>
        <position position="87"/>
    </location>
    <ligand>
        <name>Ca(2+)</name>
        <dbReference type="ChEBI" id="CHEBI:29108"/>
    </ligand>
</feature>
<feature type="binding site" evidence="1">
    <location>
        <position position="316"/>
    </location>
    <ligand>
        <name>Ca(2+)</name>
        <dbReference type="ChEBI" id="CHEBI:29108"/>
    </ligand>
</feature>
<feature type="binding site" evidence="1">
    <location>
        <position position="317"/>
    </location>
    <ligand>
        <name>Ca(2+)</name>
        <dbReference type="ChEBI" id="CHEBI:29108"/>
    </ligand>
</feature>
<feature type="modified residue" description="3-oxoalanine (Cys)" evidence="2">
    <location>
        <position position="87"/>
    </location>
</feature>
<feature type="glycosylation site" description="N-linked (GlcNAc...) asparagine" evidence="3">
    <location>
        <position position="64"/>
    </location>
</feature>
<feature type="glycosylation site" description="N-linked (GlcNAc...) asparagine" evidence="3">
    <location>
        <position position="111"/>
    </location>
</feature>
<feature type="glycosylation site" description="N-linked (GlcNAc...) asparagine" evidence="3">
    <location>
        <position position="131"/>
    </location>
</feature>
<feature type="glycosylation site" description="N-linked (GlcNAc...) asparagine" evidence="3">
    <location>
        <position position="148"/>
    </location>
</feature>
<feature type="glycosylation site" description="N-linked (GlcNAc...) asparagine" evidence="3">
    <location>
        <position position="170"/>
    </location>
</feature>
<feature type="glycosylation site" description="N-linked (GlcNAc...) asparagine" evidence="3">
    <location>
        <position position="197"/>
    </location>
</feature>
<feature type="glycosylation site" description="N-linked (GlcNAc...) asparagine" evidence="3">
    <location>
        <position position="240"/>
    </location>
</feature>
<feature type="glycosylation site" description="N-linked (GlcNAc...) asparagine" evidence="3">
    <location>
        <position position="620"/>
    </location>
</feature>
<feature type="glycosylation site" description="N-linked (GlcNAc...) asparagine" evidence="3">
    <location>
        <position position="769"/>
    </location>
</feature>
<feature type="glycosylation site" description="N-linked (GlcNAc...) asparagine" evidence="3">
    <location>
        <position position="779"/>
    </location>
</feature>
<feature type="mutagenesis site" description="Acts as a dominant negative inhibitor of Wnt signaling." evidence="5">
    <original>CC</original>
    <variation>AA</variation>
    <location>
        <begin position="87"/>
        <end position="88"/>
    </location>
</feature>
<protein>
    <recommendedName>
        <fullName>Extracellular sulfatase Sulf-1</fullName>
        <shortName>qSulf1</shortName>
        <ecNumber>3.1.6.-</ecNumber>
    </recommendedName>
</protein>
<dbReference type="EC" id="3.1.6.-"/>
<dbReference type="EMBL" id="AF410802">
    <property type="protein sequence ID" value="AAK98515.1"/>
    <property type="molecule type" value="mRNA"/>
</dbReference>
<dbReference type="SMR" id="Q90XB6"/>
<dbReference type="GlyCosmos" id="Q90XB6">
    <property type="glycosylation" value="10 sites, No reported glycans"/>
</dbReference>
<dbReference type="GO" id="GO:0009986">
    <property type="term" value="C:cell surface"/>
    <property type="evidence" value="ECO:0000314"/>
    <property type="project" value="UniProtKB"/>
</dbReference>
<dbReference type="GO" id="GO:0005783">
    <property type="term" value="C:endoplasmic reticulum"/>
    <property type="evidence" value="ECO:0000314"/>
    <property type="project" value="UniProtKB"/>
</dbReference>
<dbReference type="GO" id="GO:0005615">
    <property type="term" value="C:extracellular space"/>
    <property type="evidence" value="ECO:0000314"/>
    <property type="project" value="UniProtKB"/>
</dbReference>
<dbReference type="GO" id="GO:0005795">
    <property type="term" value="C:Golgi stack"/>
    <property type="evidence" value="ECO:0007669"/>
    <property type="project" value="UniProtKB-SubCell"/>
</dbReference>
<dbReference type="GO" id="GO:0045121">
    <property type="term" value="C:membrane raft"/>
    <property type="evidence" value="ECO:0000250"/>
    <property type="project" value="UniProtKB"/>
</dbReference>
<dbReference type="GO" id="GO:0005886">
    <property type="term" value="C:plasma membrane"/>
    <property type="evidence" value="ECO:0007669"/>
    <property type="project" value="TreeGrafter"/>
</dbReference>
<dbReference type="GO" id="GO:0004065">
    <property type="term" value="F:arylsulfatase activity"/>
    <property type="evidence" value="ECO:0000250"/>
    <property type="project" value="UniProtKB"/>
</dbReference>
<dbReference type="GO" id="GO:0005509">
    <property type="term" value="F:calcium ion binding"/>
    <property type="evidence" value="ECO:0007669"/>
    <property type="project" value="InterPro"/>
</dbReference>
<dbReference type="GO" id="GO:0005539">
    <property type="term" value="F:glycosaminoglycan binding"/>
    <property type="evidence" value="ECO:0007669"/>
    <property type="project" value="TreeGrafter"/>
</dbReference>
<dbReference type="GO" id="GO:0008449">
    <property type="term" value="F:N-acetylglucosamine-6-sulfatase activity"/>
    <property type="evidence" value="ECO:0000314"/>
    <property type="project" value="UniProtKB"/>
</dbReference>
<dbReference type="GO" id="GO:0060348">
    <property type="term" value="P:bone development"/>
    <property type="evidence" value="ECO:0000250"/>
    <property type="project" value="UniProtKB"/>
</dbReference>
<dbReference type="GO" id="GO:0001502">
    <property type="term" value="P:cartilage condensation"/>
    <property type="evidence" value="ECO:0000314"/>
    <property type="project" value="UniProtKB"/>
</dbReference>
<dbReference type="GO" id="GO:0051216">
    <property type="term" value="P:cartilage development"/>
    <property type="evidence" value="ECO:0000250"/>
    <property type="project" value="UniProtKB"/>
</dbReference>
<dbReference type="GO" id="GO:0007155">
    <property type="term" value="P:cell adhesion"/>
    <property type="evidence" value="ECO:0000314"/>
    <property type="project" value="UniProtKB"/>
</dbReference>
<dbReference type="GO" id="GO:0002063">
    <property type="term" value="P:chondrocyte development"/>
    <property type="evidence" value="ECO:0000250"/>
    <property type="project" value="UniProtKB"/>
</dbReference>
<dbReference type="GO" id="GO:0048706">
    <property type="term" value="P:embryonic skeletal system development"/>
    <property type="evidence" value="ECO:0000250"/>
    <property type="project" value="UniProtKB"/>
</dbReference>
<dbReference type="GO" id="GO:0014846">
    <property type="term" value="P:esophagus smooth muscle contraction"/>
    <property type="evidence" value="ECO:0000250"/>
    <property type="project" value="UniProtKB"/>
</dbReference>
<dbReference type="GO" id="GO:0035860">
    <property type="term" value="P:glial cell-derived neurotrophic factor receptor signaling pathway"/>
    <property type="evidence" value="ECO:0000250"/>
    <property type="project" value="UniProtKB"/>
</dbReference>
<dbReference type="GO" id="GO:0032836">
    <property type="term" value="P:glomerular basement membrane development"/>
    <property type="evidence" value="ECO:0007669"/>
    <property type="project" value="TreeGrafter"/>
</dbReference>
<dbReference type="GO" id="GO:0030201">
    <property type="term" value="P:heparan sulfate proteoglycan metabolic process"/>
    <property type="evidence" value="ECO:0000314"/>
    <property type="project" value="UniProtKB"/>
</dbReference>
<dbReference type="GO" id="GO:0060384">
    <property type="term" value="P:innervation"/>
    <property type="evidence" value="ECO:0000250"/>
    <property type="project" value="UniProtKB"/>
</dbReference>
<dbReference type="GO" id="GO:0001822">
    <property type="term" value="P:kidney development"/>
    <property type="evidence" value="ECO:0000250"/>
    <property type="project" value="UniProtKB"/>
</dbReference>
<dbReference type="GO" id="GO:0036022">
    <property type="term" value="P:limb joint morphogenesis"/>
    <property type="evidence" value="ECO:0000314"/>
    <property type="project" value="UniProtKB"/>
</dbReference>
<dbReference type="GO" id="GO:0016525">
    <property type="term" value="P:negative regulation of angiogenesis"/>
    <property type="evidence" value="ECO:0000250"/>
    <property type="project" value="UniProtKB"/>
</dbReference>
<dbReference type="GO" id="GO:0030336">
    <property type="term" value="P:negative regulation of cell migration"/>
    <property type="evidence" value="ECO:0000250"/>
    <property type="project" value="UniProtKB"/>
</dbReference>
<dbReference type="GO" id="GO:0001937">
    <property type="term" value="P:negative regulation of endothelial cell proliferation"/>
    <property type="evidence" value="ECO:0000250"/>
    <property type="project" value="UniProtKB"/>
</dbReference>
<dbReference type="GO" id="GO:0040037">
    <property type="term" value="P:negative regulation of fibroblast growth factor receptor signaling pathway"/>
    <property type="evidence" value="ECO:0000250"/>
    <property type="project" value="UniProtKB"/>
</dbReference>
<dbReference type="GO" id="GO:0060686">
    <property type="term" value="P:negative regulation of prostatic bud formation"/>
    <property type="evidence" value="ECO:0000250"/>
    <property type="project" value="UniProtKB"/>
</dbReference>
<dbReference type="GO" id="GO:0030513">
    <property type="term" value="P:positive regulation of BMP signaling pathway"/>
    <property type="evidence" value="ECO:0000250"/>
    <property type="project" value="UniProtKB"/>
</dbReference>
<dbReference type="GO" id="GO:0090263">
    <property type="term" value="P:positive regulation of canonical Wnt signaling pathway"/>
    <property type="evidence" value="ECO:0000314"/>
    <property type="project" value="UniProtKB"/>
</dbReference>
<dbReference type="GO" id="GO:0048661">
    <property type="term" value="P:positive regulation of smooth muscle cell proliferation"/>
    <property type="evidence" value="ECO:0000314"/>
    <property type="project" value="UniProtKB"/>
</dbReference>
<dbReference type="GO" id="GO:0010575">
    <property type="term" value="P:positive regulation of vascular endothelial growth factor production"/>
    <property type="evidence" value="ECO:0007669"/>
    <property type="project" value="TreeGrafter"/>
</dbReference>
<dbReference type="GO" id="GO:0030177">
    <property type="term" value="P:positive regulation of Wnt signaling pathway"/>
    <property type="evidence" value="ECO:0000250"/>
    <property type="project" value="UniProtKB"/>
</dbReference>
<dbReference type="GO" id="GO:0048010">
    <property type="term" value="P:vascular endothelial growth factor receptor signaling pathway"/>
    <property type="evidence" value="ECO:0000250"/>
    <property type="project" value="UniProtKB"/>
</dbReference>
<dbReference type="CDD" id="cd16147">
    <property type="entry name" value="G6S"/>
    <property type="match status" value="1"/>
</dbReference>
<dbReference type="FunFam" id="3.40.720.10:FF:000003">
    <property type="entry name" value="Extracellular sulfatase"/>
    <property type="match status" value="1"/>
</dbReference>
<dbReference type="Gene3D" id="3.40.720.10">
    <property type="entry name" value="Alkaline Phosphatase, subunit A"/>
    <property type="match status" value="1"/>
</dbReference>
<dbReference type="InterPro" id="IPR017850">
    <property type="entry name" value="Alkaline_phosphatase_core_sf"/>
</dbReference>
<dbReference type="InterPro" id="IPR014615">
    <property type="entry name" value="Extracellular_sulfatase"/>
</dbReference>
<dbReference type="InterPro" id="IPR024609">
    <property type="entry name" value="Extracellular_sulfatase_C"/>
</dbReference>
<dbReference type="InterPro" id="IPR024607">
    <property type="entry name" value="Sulfatase_CS"/>
</dbReference>
<dbReference type="InterPro" id="IPR000917">
    <property type="entry name" value="Sulfatase_N"/>
</dbReference>
<dbReference type="PANTHER" id="PTHR43108:SF1">
    <property type="entry name" value="EXTRACELLULAR SULFATASE SULF-1"/>
    <property type="match status" value="1"/>
</dbReference>
<dbReference type="PANTHER" id="PTHR43108">
    <property type="entry name" value="N-ACETYLGLUCOSAMINE-6-SULFATASE FAMILY MEMBER"/>
    <property type="match status" value="1"/>
</dbReference>
<dbReference type="Pfam" id="PF12548">
    <property type="entry name" value="DUF3740"/>
    <property type="match status" value="2"/>
</dbReference>
<dbReference type="Pfam" id="PF00884">
    <property type="entry name" value="Sulfatase"/>
    <property type="match status" value="1"/>
</dbReference>
<dbReference type="PIRSF" id="PIRSF036665">
    <property type="entry name" value="Sulf1"/>
    <property type="match status" value="1"/>
</dbReference>
<dbReference type="SUPFAM" id="SSF53649">
    <property type="entry name" value="Alkaline phosphatase-like"/>
    <property type="match status" value="2"/>
</dbReference>
<dbReference type="PROSITE" id="PS00523">
    <property type="entry name" value="SULFATASE_1"/>
    <property type="match status" value="1"/>
</dbReference>
<evidence type="ECO:0000250" key="1"/>
<evidence type="ECO:0000250" key="2">
    <source>
        <dbReference type="UniProtKB" id="P15289"/>
    </source>
</evidence>
<evidence type="ECO:0000255" key="3"/>
<evidence type="ECO:0000256" key="4">
    <source>
        <dbReference type="SAM" id="MobiDB-lite"/>
    </source>
</evidence>
<evidence type="ECO:0000269" key="5">
    <source>
    </source>
</evidence>
<evidence type="ECO:0000305" key="6"/>
<name>SULF1_COTCO</name>
<comment type="function">
    <text>Regulates Wnt signaling through desulfation of cell surface heparan sulfate proteoglycans.</text>
</comment>
<comment type="cofactor">
    <cofactor evidence="1">
        <name>Ca(2+)</name>
        <dbReference type="ChEBI" id="CHEBI:29108"/>
    </cofactor>
    <text evidence="1">Binds 1 Ca(2+) ion per subunit.</text>
</comment>
<comment type="subcellular location">
    <subcellularLocation>
        <location evidence="1">Endoplasmic reticulum</location>
    </subcellularLocation>
    <subcellularLocation>
        <location evidence="1">Golgi apparatus</location>
        <location evidence="1">Golgi stack</location>
    </subcellularLocation>
    <subcellularLocation>
        <location>Cell surface</location>
    </subcellularLocation>
    <text>Also localized on the cell surface.</text>
</comment>
<comment type="tissue specificity">
    <text>Expressed in the ventral spinal cord and paraxial mesoderm as well as in the floor plate.</text>
</comment>
<comment type="PTM">
    <text evidence="1">The conversion to 3-oxoalanine (also known as C-formylglycine, FGly), of a serine or cysteine residue in prokaryotes and of a cysteine residue in eukaryotes, is critical for catalytic activity.</text>
</comment>
<comment type="similarity">
    <text evidence="6">Belongs to the sulfatase family.</text>
</comment>
<sequence length="867" mass="100603">MKTSWFALFLAVLSTELLTSHSSTLKSLRFRGRVQQERKNIRPNIILVLTDDQDVELGSLQVMNKTRRIMENGGASFINAFVTTPMCCPSRSSMLTGKYVHNHNIYTNNENCSSPSWQATHEPRTFAVYLNNTGYRTAFFGKYLNEYNGSYIPPGWREWVGLVKNSRFYNYTISRNGNKEKHGFDYAKDYFTDLITNESINYFRMSKRIYPHRPIMMVISHAAPHGPEDSAPQFSELYPNASQHITPSYNYAPNMDKHWIMQYTGPMLPIHMEFTNVLQRKRLQTLMSVDDSMERLYQMLAEMGELENTYIIYTADHGYHIGQFGLVKGKSMPYDFDIRVPFFIRGPSVEPGSVVPQIVLNIDLAPTILDIAGLDTPPDMDGKSVLKLLDLERPGNRFRTNKKTKIWRDTFLVERGKFLRKKEEANKNTQQSNQLPKYERVKELCQQARYQTACEQPGQKWQCTEDASGKLRIHKCKVSSDILAIRKRTRSIHSRGYSGKDKDCNCGDTDFRNSRTQRKNQRQFLRNPSAQKYKPRFVHTRQTRSLSVEFEGEIYDINLEEEELQVLKTRSITKRHNAENDKKAEETDGAPGDTMVADGTDVIGQPSSVRVTHKCFILPNDTIRCERELYQSARAWKDHKAYIDKEIEALQDKIKNLREVRGHLKRRKPDECDCTKQSYYNKEKGVKTQEKIKSHLHPFKEAAQEVDSKLQLFKENRRRKKERKGKKRQKKGDECSLPGLTCFTHDNNHWQTAPFWNLGSFCACTSSNNNTYWCLRTVNDTHNFLFCEFATGFLEFFDMNTDPYQLTNTVHTVERGILNQLHVQLMELRSCQGYKQCNPRPKGLETGNKDGGSYDPHRGQLWDGWEG</sequence>
<keyword id="KW-0106">Calcium</keyword>
<keyword id="KW-0256">Endoplasmic reticulum</keyword>
<keyword id="KW-0325">Glycoprotein</keyword>
<keyword id="KW-0333">Golgi apparatus</keyword>
<keyword id="KW-0378">Hydrolase</keyword>
<keyword id="KW-0479">Metal-binding</keyword>
<keyword id="KW-0732">Signal</keyword>
<reference key="1">
    <citation type="journal article" date="2001" name="Science">
        <title>Regulation of Wnt signaling and embryo patterning by an extracellular sulfatase.</title>
        <authorList>
            <person name="Dhoot G.K."/>
            <person name="Gustafsson M.K."/>
            <person name="Ai X."/>
            <person name="Sun W."/>
            <person name="Standiford D.M."/>
            <person name="Emerson C.P. Jr."/>
        </authorList>
    </citation>
    <scope>NUCLEOTIDE SEQUENCE [MRNA]</scope>
    <scope>MUTAGENESIS OF 87-CYS-CYS-88</scope>
</reference>
<accession>Q90XB6</accession>
<proteinExistence type="evidence at protein level"/>
<gene>
    <name type="primary">SULF1</name>
</gene>